<dbReference type="EC" id="2.7.8.7" evidence="1"/>
<dbReference type="EMBL" id="CP001389">
    <property type="protein sequence ID" value="ACP24618.1"/>
    <property type="molecule type" value="Genomic_DNA"/>
</dbReference>
<dbReference type="RefSeq" id="WP_012707403.1">
    <property type="nucleotide sequence ID" value="NC_012587.1"/>
</dbReference>
<dbReference type="RefSeq" id="YP_002825371.1">
    <property type="nucleotide sequence ID" value="NC_012587.1"/>
</dbReference>
<dbReference type="SMR" id="C3M8S2"/>
<dbReference type="STRING" id="394.NGR_c08270"/>
<dbReference type="GeneID" id="48972360"/>
<dbReference type="KEGG" id="rhi:NGR_c08270"/>
<dbReference type="PATRIC" id="fig|394.7.peg.3639"/>
<dbReference type="eggNOG" id="COG0736">
    <property type="taxonomic scope" value="Bacteria"/>
</dbReference>
<dbReference type="HOGENOM" id="CLU_089696_0_2_5"/>
<dbReference type="OrthoDB" id="517356at2"/>
<dbReference type="Proteomes" id="UP000001054">
    <property type="component" value="Chromosome"/>
</dbReference>
<dbReference type="GO" id="GO:0005737">
    <property type="term" value="C:cytoplasm"/>
    <property type="evidence" value="ECO:0007669"/>
    <property type="project" value="UniProtKB-SubCell"/>
</dbReference>
<dbReference type="GO" id="GO:0008897">
    <property type="term" value="F:holo-[acyl-carrier-protein] synthase activity"/>
    <property type="evidence" value="ECO:0007669"/>
    <property type="project" value="UniProtKB-UniRule"/>
</dbReference>
<dbReference type="GO" id="GO:0000287">
    <property type="term" value="F:magnesium ion binding"/>
    <property type="evidence" value="ECO:0007669"/>
    <property type="project" value="UniProtKB-UniRule"/>
</dbReference>
<dbReference type="GO" id="GO:0006633">
    <property type="term" value="P:fatty acid biosynthetic process"/>
    <property type="evidence" value="ECO:0007669"/>
    <property type="project" value="UniProtKB-UniRule"/>
</dbReference>
<dbReference type="Gene3D" id="3.90.470.20">
    <property type="entry name" value="4'-phosphopantetheinyl transferase domain"/>
    <property type="match status" value="1"/>
</dbReference>
<dbReference type="HAMAP" id="MF_00101">
    <property type="entry name" value="AcpS"/>
    <property type="match status" value="1"/>
</dbReference>
<dbReference type="InterPro" id="IPR008278">
    <property type="entry name" value="4-PPantetheinyl_Trfase_dom"/>
</dbReference>
<dbReference type="InterPro" id="IPR037143">
    <property type="entry name" value="4-PPantetheinyl_Trfase_dom_sf"/>
</dbReference>
<dbReference type="InterPro" id="IPR002582">
    <property type="entry name" value="ACPS"/>
</dbReference>
<dbReference type="InterPro" id="IPR004568">
    <property type="entry name" value="Ppantetheine-prot_Trfase_dom"/>
</dbReference>
<dbReference type="NCBIfam" id="TIGR00516">
    <property type="entry name" value="acpS"/>
    <property type="match status" value="1"/>
</dbReference>
<dbReference type="NCBIfam" id="TIGR00556">
    <property type="entry name" value="pantethn_trn"/>
    <property type="match status" value="1"/>
</dbReference>
<dbReference type="Pfam" id="PF01648">
    <property type="entry name" value="ACPS"/>
    <property type="match status" value="1"/>
</dbReference>
<dbReference type="SUPFAM" id="SSF56214">
    <property type="entry name" value="4'-phosphopantetheinyl transferase"/>
    <property type="match status" value="1"/>
</dbReference>
<protein>
    <recommendedName>
        <fullName evidence="1">Holo-[acyl-carrier-protein] synthase</fullName>
        <shortName evidence="1">Holo-ACP synthase</shortName>
        <ecNumber evidence="1">2.7.8.7</ecNumber>
    </recommendedName>
    <alternativeName>
        <fullName evidence="1">4'-phosphopantetheinyl transferase AcpS</fullName>
    </alternativeName>
</protein>
<keyword id="KW-0963">Cytoplasm</keyword>
<keyword id="KW-0275">Fatty acid biosynthesis</keyword>
<keyword id="KW-0276">Fatty acid metabolism</keyword>
<keyword id="KW-0444">Lipid biosynthesis</keyword>
<keyword id="KW-0443">Lipid metabolism</keyword>
<keyword id="KW-0460">Magnesium</keyword>
<keyword id="KW-0479">Metal-binding</keyword>
<keyword id="KW-1185">Reference proteome</keyword>
<keyword id="KW-0808">Transferase</keyword>
<accession>C3M8S2</accession>
<organism>
    <name type="scientific">Sinorhizobium fredii (strain NBRC 101917 / NGR234)</name>
    <dbReference type="NCBI Taxonomy" id="394"/>
    <lineage>
        <taxon>Bacteria</taxon>
        <taxon>Pseudomonadati</taxon>
        <taxon>Pseudomonadota</taxon>
        <taxon>Alphaproteobacteria</taxon>
        <taxon>Hyphomicrobiales</taxon>
        <taxon>Rhizobiaceae</taxon>
        <taxon>Sinorhizobium/Ensifer group</taxon>
        <taxon>Sinorhizobium</taxon>
    </lineage>
</organism>
<reference key="1">
    <citation type="journal article" date="2009" name="Appl. Environ. Microbiol.">
        <title>Rhizobium sp. strain NGR234 possesses a remarkable number of secretion systems.</title>
        <authorList>
            <person name="Schmeisser C."/>
            <person name="Liesegang H."/>
            <person name="Krysciak D."/>
            <person name="Bakkou N."/>
            <person name="Le Quere A."/>
            <person name="Wollherr A."/>
            <person name="Heinemeyer I."/>
            <person name="Morgenstern B."/>
            <person name="Pommerening-Roeser A."/>
            <person name="Flores M."/>
            <person name="Palacios R."/>
            <person name="Brenner S."/>
            <person name="Gottschalk G."/>
            <person name="Schmitz R.A."/>
            <person name="Broughton W.J."/>
            <person name="Perret X."/>
            <person name="Strittmatter A.W."/>
            <person name="Streit W.R."/>
        </authorList>
    </citation>
    <scope>NUCLEOTIDE SEQUENCE [LARGE SCALE GENOMIC DNA]</scope>
    <source>
        <strain>NBRC 101917 / NGR234</strain>
    </source>
</reference>
<comment type="function">
    <text evidence="1">Transfers the 4'-phosphopantetheine moiety from coenzyme A to a Ser of acyl-carrier-protein.</text>
</comment>
<comment type="catalytic activity">
    <reaction evidence="1">
        <text>apo-[ACP] + CoA = holo-[ACP] + adenosine 3',5'-bisphosphate + H(+)</text>
        <dbReference type="Rhea" id="RHEA:12068"/>
        <dbReference type="Rhea" id="RHEA-COMP:9685"/>
        <dbReference type="Rhea" id="RHEA-COMP:9690"/>
        <dbReference type="ChEBI" id="CHEBI:15378"/>
        <dbReference type="ChEBI" id="CHEBI:29999"/>
        <dbReference type="ChEBI" id="CHEBI:57287"/>
        <dbReference type="ChEBI" id="CHEBI:58343"/>
        <dbReference type="ChEBI" id="CHEBI:64479"/>
        <dbReference type="EC" id="2.7.8.7"/>
    </reaction>
</comment>
<comment type="cofactor">
    <cofactor evidence="1">
        <name>Mg(2+)</name>
        <dbReference type="ChEBI" id="CHEBI:18420"/>
    </cofactor>
</comment>
<comment type="subcellular location">
    <subcellularLocation>
        <location evidence="1">Cytoplasm</location>
    </subcellularLocation>
</comment>
<comment type="similarity">
    <text evidence="1">Belongs to the P-Pant transferase superfamily. AcpS family.</text>
</comment>
<gene>
    <name evidence="1" type="primary">acpS</name>
    <name type="ordered locus">NGR_c08270</name>
</gene>
<evidence type="ECO:0000255" key="1">
    <source>
        <dbReference type="HAMAP-Rule" id="MF_00101"/>
    </source>
</evidence>
<feature type="chain" id="PRO_1000118821" description="Holo-[acyl-carrier-protein] synthase">
    <location>
        <begin position="1"/>
        <end position="139"/>
    </location>
</feature>
<feature type="binding site" evidence="1">
    <location>
        <position position="8"/>
    </location>
    <ligand>
        <name>Mg(2+)</name>
        <dbReference type="ChEBI" id="CHEBI:18420"/>
    </ligand>
</feature>
<feature type="binding site" evidence="1">
    <location>
        <position position="57"/>
    </location>
    <ligand>
        <name>Mg(2+)</name>
        <dbReference type="ChEBI" id="CHEBI:18420"/>
    </ligand>
</feature>
<name>ACPS_SINFN</name>
<sequence length="139" mass="14971">MIIGIGSDLIDIRRIENSLQRFGERFVNRCFTDIEIAKSDARKNRAASYAKRFAAKEACSKALGTGLAQGVFWKDMGVVNMPGGKPTMQLTGGAAARLQEMLPVGHRAAIHLTITDDFPLAQAFVIIEALPVAPAEGTV</sequence>
<proteinExistence type="inferred from homology"/>